<dbReference type="EMBL" id="AL445565">
    <property type="protein sequence ID" value="CAC13845.1"/>
    <property type="molecule type" value="Genomic_DNA"/>
</dbReference>
<dbReference type="PIR" id="H90595">
    <property type="entry name" value="H90595"/>
</dbReference>
<dbReference type="RefSeq" id="WP_010925473.1">
    <property type="nucleotide sequence ID" value="NC_002771.1"/>
</dbReference>
<dbReference type="SMR" id="Q98PP7"/>
<dbReference type="STRING" id="272635.gene:17577282"/>
<dbReference type="KEGG" id="mpu:MYPU_6720"/>
<dbReference type="eggNOG" id="COG0858">
    <property type="taxonomic scope" value="Bacteria"/>
</dbReference>
<dbReference type="HOGENOM" id="CLU_089475_3_2_14"/>
<dbReference type="BioCyc" id="MPUL272635:G1GT6-684-MONOMER"/>
<dbReference type="Proteomes" id="UP000000528">
    <property type="component" value="Chromosome"/>
</dbReference>
<dbReference type="GO" id="GO:0005829">
    <property type="term" value="C:cytosol"/>
    <property type="evidence" value="ECO:0007669"/>
    <property type="project" value="TreeGrafter"/>
</dbReference>
<dbReference type="GO" id="GO:0043024">
    <property type="term" value="F:ribosomal small subunit binding"/>
    <property type="evidence" value="ECO:0007669"/>
    <property type="project" value="TreeGrafter"/>
</dbReference>
<dbReference type="GO" id="GO:0030490">
    <property type="term" value="P:maturation of SSU-rRNA"/>
    <property type="evidence" value="ECO:0007669"/>
    <property type="project" value="UniProtKB-UniRule"/>
</dbReference>
<dbReference type="Gene3D" id="3.30.300.20">
    <property type="match status" value="1"/>
</dbReference>
<dbReference type="HAMAP" id="MF_00003">
    <property type="entry name" value="RbfA"/>
    <property type="match status" value="1"/>
</dbReference>
<dbReference type="InterPro" id="IPR015946">
    <property type="entry name" value="KH_dom-like_a/b"/>
</dbReference>
<dbReference type="InterPro" id="IPR000238">
    <property type="entry name" value="RbfA"/>
</dbReference>
<dbReference type="InterPro" id="IPR023799">
    <property type="entry name" value="RbfA_dom_sf"/>
</dbReference>
<dbReference type="InterPro" id="IPR020053">
    <property type="entry name" value="Ribosome-bd_factorA_CS"/>
</dbReference>
<dbReference type="NCBIfam" id="TIGR00082">
    <property type="entry name" value="rbfA"/>
    <property type="match status" value="1"/>
</dbReference>
<dbReference type="PANTHER" id="PTHR33515">
    <property type="entry name" value="RIBOSOME-BINDING FACTOR A, CHLOROPLASTIC-RELATED"/>
    <property type="match status" value="1"/>
</dbReference>
<dbReference type="PANTHER" id="PTHR33515:SF1">
    <property type="entry name" value="RIBOSOME-BINDING FACTOR A, CHLOROPLASTIC-RELATED"/>
    <property type="match status" value="1"/>
</dbReference>
<dbReference type="Pfam" id="PF02033">
    <property type="entry name" value="RBFA"/>
    <property type="match status" value="1"/>
</dbReference>
<dbReference type="SUPFAM" id="SSF89919">
    <property type="entry name" value="Ribosome-binding factor A, RbfA"/>
    <property type="match status" value="1"/>
</dbReference>
<dbReference type="PROSITE" id="PS01319">
    <property type="entry name" value="RBFA"/>
    <property type="match status" value="1"/>
</dbReference>
<accession>Q98PP7</accession>
<comment type="function">
    <text evidence="1">One of several proteins that assist in the late maturation steps of the functional core of the 30S ribosomal subunit. Associates with free 30S ribosomal subunits (but not with 30S subunits that are part of 70S ribosomes or polysomes). Required for efficient processing of 16S rRNA. May interact with the 5'-terminal helix region of 16S rRNA.</text>
</comment>
<comment type="subunit">
    <text evidence="1">Monomer. Binds 30S ribosomal subunits, but not 50S ribosomal subunits or 70S ribosomes.</text>
</comment>
<comment type="subcellular location">
    <subcellularLocation>
        <location evidence="1">Cytoplasm</location>
    </subcellularLocation>
</comment>
<comment type="similarity">
    <text evidence="1">Belongs to the RbfA family.</text>
</comment>
<gene>
    <name evidence="1" type="primary">rbfA</name>
    <name type="ordered locus">MYPU_6720</name>
</gene>
<protein>
    <recommendedName>
        <fullName evidence="1">Ribosome-binding factor A</fullName>
    </recommendedName>
</protein>
<reference key="1">
    <citation type="journal article" date="2001" name="Nucleic Acids Res.">
        <title>The complete genome sequence of the murine respiratory pathogen Mycoplasma pulmonis.</title>
        <authorList>
            <person name="Chambaud I."/>
            <person name="Heilig R."/>
            <person name="Ferris S."/>
            <person name="Barbe V."/>
            <person name="Samson D."/>
            <person name="Galisson F."/>
            <person name="Moszer I."/>
            <person name="Dybvig K."/>
            <person name="Wroblewski H."/>
            <person name="Viari A."/>
            <person name="Rocha E.P.C."/>
            <person name="Blanchard A."/>
        </authorList>
    </citation>
    <scope>NUCLEOTIDE SEQUENCE [LARGE SCALE GENOMIC DNA]</scope>
    <source>
        <strain>UAB CTIP</strain>
    </source>
</reference>
<organism>
    <name type="scientific">Mycoplasmopsis pulmonis (strain UAB CTIP)</name>
    <name type="common">Mycoplasma pulmonis</name>
    <dbReference type="NCBI Taxonomy" id="272635"/>
    <lineage>
        <taxon>Bacteria</taxon>
        <taxon>Bacillati</taxon>
        <taxon>Mycoplasmatota</taxon>
        <taxon>Mycoplasmoidales</taxon>
        <taxon>Metamycoplasmataceae</taxon>
        <taxon>Mycoplasmopsis</taxon>
    </lineage>
</organism>
<sequence>MQNIKLEKREQDILINISRIISEEVQNLKDVLTTVVGIKLSSDLSHCNVYVTFSKNSKKNLERLNQASGYIKKQLSSILKWRKIPSLHFKIDDTFEKSLKIEQILEEIKKEK</sequence>
<keyword id="KW-0963">Cytoplasm</keyword>
<keyword id="KW-1185">Reference proteome</keyword>
<keyword id="KW-0690">Ribosome biogenesis</keyword>
<proteinExistence type="inferred from homology"/>
<feature type="chain" id="PRO_0000102696" description="Ribosome-binding factor A">
    <location>
        <begin position="1"/>
        <end position="112"/>
    </location>
</feature>
<evidence type="ECO:0000255" key="1">
    <source>
        <dbReference type="HAMAP-Rule" id="MF_00003"/>
    </source>
</evidence>
<name>RBFA_MYCPU</name>